<reference key="1">
    <citation type="journal article" date="2003" name="Nature">
        <title>The DNA sequence and analysis of human chromosome 6.</title>
        <authorList>
            <person name="Mungall A.J."/>
            <person name="Palmer S.A."/>
            <person name="Sims S.K."/>
            <person name="Edwards C.A."/>
            <person name="Ashurst J.L."/>
            <person name="Wilming L."/>
            <person name="Jones M.C."/>
            <person name="Horton R."/>
            <person name="Hunt S.E."/>
            <person name="Scott C.E."/>
            <person name="Gilbert J.G.R."/>
            <person name="Clamp M.E."/>
            <person name="Bethel G."/>
            <person name="Milne S."/>
            <person name="Ainscough R."/>
            <person name="Almeida J.P."/>
            <person name="Ambrose K.D."/>
            <person name="Andrews T.D."/>
            <person name="Ashwell R.I.S."/>
            <person name="Babbage A.K."/>
            <person name="Bagguley C.L."/>
            <person name="Bailey J."/>
            <person name="Banerjee R."/>
            <person name="Barker D.J."/>
            <person name="Barlow K.F."/>
            <person name="Bates K."/>
            <person name="Beare D.M."/>
            <person name="Beasley H."/>
            <person name="Beasley O."/>
            <person name="Bird C.P."/>
            <person name="Blakey S.E."/>
            <person name="Bray-Allen S."/>
            <person name="Brook J."/>
            <person name="Brown A.J."/>
            <person name="Brown J.Y."/>
            <person name="Burford D.C."/>
            <person name="Burrill W."/>
            <person name="Burton J."/>
            <person name="Carder C."/>
            <person name="Carter N.P."/>
            <person name="Chapman J.C."/>
            <person name="Clark S.Y."/>
            <person name="Clark G."/>
            <person name="Clee C.M."/>
            <person name="Clegg S."/>
            <person name="Cobley V."/>
            <person name="Collier R.E."/>
            <person name="Collins J.E."/>
            <person name="Colman L.K."/>
            <person name="Corby N.R."/>
            <person name="Coville G.J."/>
            <person name="Culley K.M."/>
            <person name="Dhami P."/>
            <person name="Davies J."/>
            <person name="Dunn M."/>
            <person name="Earthrowl M.E."/>
            <person name="Ellington A.E."/>
            <person name="Evans K.A."/>
            <person name="Faulkner L."/>
            <person name="Francis M.D."/>
            <person name="Frankish A."/>
            <person name="Frankland J."/>
            <person name="French L."/>
            <person name="Garner P."/>
            <person name="Garnett J."/>
            <person name="Ghori M.J."/>
            <person name="Gilby L.M."/>
            <person name="Gillson C.J."/>
            <person name="Glithero R.J."/>
            <person name="Grafham D.V."/>
            <person name="Grant M."/>
            <person name="Gribble S."/>
            <person name="Griffiths C."/>
            <person name="Griffiths M.N.D."/>
            <person name="Hall R."/>
            <person name="Halls K.S."/>
            <person name="Hammond S."/>
            <person name="Harley J.L."/>
            <person name="Hart E.A."/>
            <person name="Heath P.D."/>
            <person name="Heathcott R."/>
            <person name="Holmes S.J."/>
            <person name="Howden P.J."/>
            <person name="Howe K.L."/>
            <person name="Howell G.R."/>
            <person name="Huckle E."/>
            <person name="Humphray S.J."/>
            <person name="Humphries M.D."/>
            <person name="Hunt A.R."/>
            <person name="Johnson C.M."/>
            <person name="Joy A.A."/>
            <person name="Kay M."/>
            <person name="Keenan S.J."/>
            <person name="Kimberley A.M."/>
            <person name="King A."/>
            <person name="Laird G.K."/>
            <person name="Langford C."/>
            <person name="Lawlor S."/>
            <person name="Leongamornlert D.A."/>
            <person name="Leversha M."/>
            <person name="Lloyd C.R."/>
            <person name="Lloyd D.M."/>
            <person name="Loveland J.E."/>
            <person name="Lovell J."/>
            <person name="Martin S."/>
            <person name="Mashreghi-Mohammadi M."/>
            <person name="Maslen G.L."/>
            <person name="Matthews L."/>
            <person name="McCann O.T."/>
            <person name="McLaren S.J."/>
            <person name="McLay K."/>
            <person name="McMurray A."/>
            <person name="Moore M.J.F."/>
            <person name="Mullikin J.C."/>
            <person name="Niblett D."/>
            <person name="Nickerson T."/>
            <person name="Novik K.L."/>
            <person name="Oliver K."/>
            <person name="Overton-Larty E.K."/>
            <person name="Parker A."/>
            <person name="Patel R."/>
            <person name="Pearce A.V."/>
            <person name="Peck A.I."/>
            <person name="Phillimore B.J.C.T."/>
            <person name="Phillips S."/>
            <person name="Plumb R.W."/>
            <person name="Porter K.M."/>
            <person name="Ramsey Y."/>
            <person name="Ranby S.A."/>
            <person name="Rice C.M."/>
            <person name="Ross M.T."/>
            <person name="Searle S.M."/>
            <person name="Sehra H.K."/>
            <person name="Sheridan E."/>
            <person name="Skuce C.D."/>
            <person name="Smith S."/>
            <person name="Smith M."/>
            <person name="Spraggon L."/>
            <person name="Squares S.L."/>
            <person name="Steward C.A."/>
            <person name="Sycamore N."/>
            <person name="Tamlyn-Hall G."/>
            <person name="Tester J."/>
            <person name="Theaker A.J."/>
            <person name="Thomas D.W."/>
            <person name="Thorpe A."/>
            <person name="Tracey A."/>
            <person name="Tromans A."/>
            <person name="Tubby B."/>
            <person name="Wall M."/>
            <person name="Wallis J.M."/>
            <person name="West A.P."/>
            <person name="White S.S."/>
            <person name="Whitehead S.L."/>
            <person name="Whittaker H."/>
            <person name="Wild A."/>
            <person name="Willey D.J."/>
            <person name="Wilmer T.E."/>
            <person name="Wood J.M."/>
            <person name="Wray P.W."/>
            <person name="Wyatt J.C."/>
            <person name="Young L."/>
            <person name="Younger R.M."/>
            <person name="Bentley D.R."/>
            <person name="Coulson A."/>
            <person name="Durbin R.M."/>
            <person name="Hubbard T."/>
            <person name="Sulston J.E."/>
            <person name="Dunham I."/>
            <person name="Rogers J."/>
            <person name="Beck S."/>
        </authorList>
    </citation>
    <scope>NUCLEOTIDE SEQUENCE [LARGE SCALE GENOMIC DNA]</scope>
</reference>
<reference key="2">
    <citation type="journal article" date="2015" name="Proteomics">
        <title>N-terminome analysis of the human mitochondrial proteome.</title>
        <authorList>
            <person name="Vaca Jacome A.S."/>
            <person name="Rabilloud T."/>
            <person name="Schaeffer-Reiss C."/>
            <person name="Rompais M."/>
            <person name="Ayoub D."/>
            <person name="Lane L."/>
            <person name="Bairoch A."/>
            <person name="Van Dorsselaer A."/>
            <person name="Carapito C."/>
        </authorList>
    </citation>
    <scope>IDENTIFICATION BY MASS SPECTROMETRY [LARGE SCALE ANALYSIS]</scope>
</reference>
<organism>
    <name type="scientific">Homo sapiens</name>
    <name type="common">Human</name>
    <dbReference type="NCBI Taxonomy" id="9606"/>
    <lineage>
        <taxon>Eukaryota</taxon>
        <taxon>Metazoa</taxon>
        <taxon>Chordata</taxon>
        <taxon>Craniata</taxon>
        <taxon>Vertebrata</taxon>
        <taxon>Euteleostomi</taxon>
        <taxon>Mammalia</taxon>
        <taxon>Eutheria</taxon>
        <taxon>Euarchontoglires</taxon>
        <taxon>Primates</taxon>
        <taxon>Haplorrhini</taxon>
        <taxon>Catarrhini</taxon>
        <taxon>Hominidae</taxon>
        <taxon>Homo</taxon>
    </lineage>
</organism>
<proteinExistence type="evidence at protein level"/>
<gene>
    <name type="primary">RAB44</name>
</gene>
<evidence type="ECO:0000250" key="1"/>
<evidence type="ECO:0000255" key="2"/>
<evidence type="ECO:0000255" key="3">
    <source>
        <dbReference type="PROSITE-ProRule" id="PRU00448"/>
    </source>
</evidence>
<evidence type="ECO:0000256" key="4">
    <source>
        <dbReference type="SAM" id="MobiDB-lite"/>
    </source>
</evidence>
<evidence type="ECO:0000305" key="5"/>
<keyword id="KW-1003">Cell membrane</keyword>
<keyword id="KW-0175">Coiled coil</keyword>
<keyword id="KW-0342">GTP-binding</keyword>
<keyword id="KW-0449">Lipoprotein</keyword>
<keyword id="KW-0472">Membrane</keyword>
<keyword id="KW-0547">Nucleotide-binding</keyword>
<keyword id="KW-0636">Prenylation</keyword>
<keyword id="KW-1267">Proteomics identification</keyword>
<keyword id="KW-1185">Reference proteome</keyword>
<sequence length="1021" mass="110850">METGQRTSRKVRKLGSNRRRQTREPADGEGAAVAPEPESWSSQAAAELQAFFQDCGAKERGFVTREDLAVAKFSFLGSKEESEMIFDWVDVERKGHLSLEEFSSGLKNIFGSSQSPHRLRRRKPLPSKRVSATTSFPALEEADAEEKEAFLAFMEQLGTGHLLPKQMEIWQLWGQLRQEEPQLAGNLAGFLAKMTSRLQEAQADKEALELTLRKRDSDHHREVQQLYEEMEQQIRQEKQQLQAESDSRGLALTSQMQDVLEAKEREVQRLAEGQRELEAQLSHLRSTHQEAASENQQLQEAKRDLAGRLEEVRGQLQVTRGRLDAARGRVSWQVEEKLSFPGAGEKTPDPQAASPEEAPLPGLFGDNDDWDQLLSNFGSPPHGALQLCWSPPPTPRATSGPQTPRVVRQISISEPQAFLFGQEPSSDPDGAPRTPPGVTFSAKDNKGVDPHEQDIRAEQPVEPHDPDPNQEPGSTPEGRLLWGLSGSLVAPAFKVLIPLEDGPPPPANSPPPQAPAGSSKQIQASDPDDKGPGSWAPPSGAQPGAGAGPQEPTQTPPTMTERETQPGPSPTTALTGVGPAKPPRQRDALQQDLHATGSEPRLGTQRARALTLGPAEPFQGLEFVGPVPTERLEQGQAGPAVQEGLPEGLREAHGQVLGLGELSAFPHQELEEEPRSEEGKQEGRGGQDLSSEQSEQSVEAHGLETAHSELPQQDSLLVSLPSATPQAQVEAEGPTPGKSAPPRGSPPRGAQPGAGAGPQEPTQTPPTMAEQEAQPRPSLTTAHAEEQGPPHSREPRAESRLEDPGMDSREAGLTPSPGDPMAGGGPQANPDYLFHVIFLGDSNVGKTSFLHLLHQNSFATGLTATVGVDFRVKTLLVDNKCFVLQLWDTAGQERYHSMTRQLLRKADGVVLMYDITSQESFAHVRYWLDCLQDAGSDGVVILLLGNKMDCEEERQVSVEAGQQLAQELGVYFGECSAALGHNILEPVVNLARSLRMQEEGLKDSLVKVAPKRPPKRFGCCS</sequence>
<feature type="chain" id="PRO_0000333077" description="Ras-related protein Rab-44">
    <location>
        <begin position="1"/>
        <end position="1021"/>
    </location>
</feature>
<feature type="domain" description="EF-hand" evidence="3">
    <location>
        <begin position="77"/>
        <end position="112"/>
    </location>
</feature>
<feature type="region of interest" description="Disordered" evidence="4">
    <location>
        <begin position="1"/>
        <end position="40"/>
    </location>
</feature>
<feature type="region of interest" description="Disordered" evidence="4">
    <location>
        <begin position="113"/>
        <end position="133"/>
    </location>
</feature>
<feature type="region of interest" description="Disordered" evidence="4">
    <location>
        <begin position="339"/>
        <end position="405"/>
    </location>
</feature>
<feature type="region of interest" description="Disordered" evidence="4">
    <location>
        <begin position="419"/>
        <end position="483"/>
    </location>
</feature>
<feature type="region of interest" description="Disordered" evidence="4">
    <location>
        <begin position="495"/>
        <end position="827"/>
    </location>
</feature>
<feature type="coiled-coil region" evidence="2">
    <location>
        <begin position="191"/>
        <end position="315"/>
    </location>
</feature>
<feature type="compositionally biased region" description="Basic residues" evidence="4">
    <location>
        <begin position="7"/>
        <end position="21"/>
    </location>
</feature>
<feature type="compositionally biased region" description="Basic residues" evidence="4">
    <location>
        <begin position="117"/>
        <end position="126"/>
    </location>
</feature>
<feature type="compositionally biased region" description="Basic and acidic residues" evidence="4">
    <location>
        <begin position="443"/>
        <end position="467"/>
    </location>
</feature>
<feature type="compositionally biased region" description="Pro residues" evidence="4">
    <location>
        <begin position="501"/>
        <end position="514"/>
    </location>
</feature>
<feature type="compositionally biased region" description="Low complexity" evidence="4">
    <location>
        <begin position="532"/>
        <end position="559"/>
    </location>
</feature>
<feature type="compositionally biased region" description="Basic and acidic residues" evidence="4">
    <location>
        <begin position="676"/>
        <end position="685"/>
    </location>
</feature>
<feature type="compositionally biased region" description="Polar residues" evidence="4">
    <location>
        <begin position="688"/>
        <end position="697"/>
    </location>
</feature>
<feature type="compositionally biased region" description="Polar residues" evidence="4">
    <location>
        <begin position="710"/>
        <end position="727"/>
    </location>
</feature>
<feature type="compositionally biased region" description="Low complexity" evidence="4">
    <location>
        <begin position="736"/>
        <end position="759"/>
    </location>
</feature>
<feature type="compositionally biased region" description="Basic and acidic residues" evidence="4">
    <location>
        <begin position="783"/>
        <end position="810"/>
    </location>
</feature>
<feature type="binding site" evidence="1">
    <location>
        <begin position="840"/>
        <end position="847"/>
    </location>
    <ligand>
        <name>GTP</name>
        <dbReference type="ChEBI" id="CHEBI:37565"/>
    </ligand>
</feature>
<feature type="binding site" evidence="1">
    <location>
        <begin position="888"/>
        <end position="892"/>
    </location>
    <ligand>
        <name>GTP</name>
        <dbReference type="ChEBI" id="CHEBI:37565"/>
    </ligand>
</feature>
<feature type="binding site" evidence="1">
    <location>
        <begin position="946"/>
        <end position="949"/>
    </location>
    <ligand>
        <name>GTP</name>
        <dbReference type="ChEBI" id="CHEBI:37565"/>
    </ligand>
</feature>
<feature type="lipid moiety-binding region" description="S-geranylgeranyl cysteine" evidence="1">
    <location>
        <position position="1019"/>
    </location>
</feature>
<feature type="lipid moiety-binding region" description="S-geranylgeranyl cysteine" evidence="1">
    <location>
        <position position="1020"/>
    </location>
</feature>
<accession>Q7Z6P3</accession>
<accession>A0A087WXI0</accession>
<dbReference type="EMBL" id="Z85996">
    <property type="status" value="NOT_ANNOTATED_CDS"/>
    <property type="molecule type" value="Genomic_DNA"/>
</dbReference>
<dbReference type="CCDS" id="CCDS75442.1"/>
<dbReference type="RefSeq" id="NP_001244286.1">
    <property type="nucleotide sequence ID" value="NM_001257357.2"/>
</dbReference>
<dbReference type="RefSeq" id="XP_024302203.1">
    <property type="nucleotide sequence ID" value="XM_024446435.2"/>
</dbReference>
<dbReference type="RefSeq" id="XP_024302204.1">
    <property type="nucleotide sequence ID" value="XM_024446436.2"/>
</dbReference>
<dbReference type="SMR" id="Q7Z6P3"/>
<dbReference type="FunCoup" id="Q7Z6P3">
    <property type="interactions" value="228"/>
</dbReference>
<dbReference type="IntAct" id="Q7Z6P3">
    <property type="interactions" value="1"/>
</dbReference>
<dbReference type="STRING" id="9606.ENSP00000481054"/>
<dbReference type="GlyGen" id="Q7Z6P3">
    <property type="glycosylation" value="4 sites, 1 O-linked glycan (1 site)"/>
</dbReference>
<dbReference type="iPTMnet" id="Q7Z6P3"/>
<dbReference type="PhosphoSitePlus" id="Q7Z6P3"/>
<dbReference type="BioMuta" id="RAB44"/>
<dbReference type="DMDM" id="317373517"/>
<dbReference type="jPOST" id="Q7Z6P3"/>
<dbReference type="MassIVE" id="Q7Z6P3"/>
<dbReference type="PaxDb" id="9606-ENSP00000481054"/>
<dbReference type="PeptideAtlas" id="Q7Z6P3"/>
<dbReference type="ProteomicsDB" id="69451"/>
<dbReference type="TopDownProteomics" id="Q7Z6P3"/>
<dbReference type="Antibodypedia" id="82285">
    <property type="antibodies" value="4 antibodies from 4 providers"/>
</dbReference>
<dbReference type="DNASU" id="401258"/>
<dbReference type="Ensembl" id="ENST00000612677.6">
    <property type="protein sequence ID" value="ENSP00000481054.1"/>
    <property type="gene ID" value="ENSG00000255587.9"/>
</dbReference>
<dbReference type="GeneID" id="401258"/>
<dbReference type="KEGG" id="hsa:401258"/>
<dbReference type="MANE-Select" id="ENST00000612677.6">
    <property type="protein sequence ID" value="ENSP00000481054.1"/>
    <property type="RefSeq nucleotide sequence ID" value="NM_001257357.2"/>
    <property type="RefSeq protein sequence ID" value="NP_001244286.1"/>
</dbReference>
<dbReference type="UCSC" id="uc063oev.1">
    <property type="organism name" value="human"/>
</dbReference>
<dbReference type="AGR" id="HGNC:21068"/>
<dbReference type="CTD" id="401258"/>
<dbReference type="GeneCards" id="RAB44"/>
<dbReference type="HGNC" id="HGNC:21068">
    <property type="gene designation" value="RAB44"/>
</dbReference>
<dbReference type="HPA" id="ENSG00000255587">
    <property type="expression patterns" value="Tissue enriched (bone)"/>
</dbReference>
<dbReference type="neXtProt" id="NX_Q7Z6P3"/>
<dbReference type="OpenTargets" id="ENSG00000255587"/>
<dbReference type="VEuPathDB" id="HostDB:ENSG00000255587"/>
<dbReference type="eggNOG" id="KOG0078">
    <property type="taxonomic scope" value="Eukaryota"/>
</dbReference>
<dbReference type="GeneTree" id="ENSGT00940000160379"/>
<dbReference type="HOGENOM" id="CLU_012405_0_0_1"/>
<dbReference type="InParanoid" id="Q7Z6P3"/>
<dbReference type="OMA" id="SEMIFDW"/>
<dbReference type="OrthoDB" id="9396170at2759"/>
<dbReference type="PAN-GO" id="Q7Z6P3">
    <property type="GO annotations" value="1 GO annotation based on evolutionary models"/>
</dbReference>
<dbReference type="PhylomeDB" id="Q7Z6P3"/>
<dbReference type="TreeFam" id="TF313199"/>
<dbReference type="PathwayCommons" id="Q7Z6P3"/>
<dbReference type="Reactome" id="R-HSA-6798695">
    <property type="pathway name" value="Neutrophil degranulation"/>
</dbReference>
<dbReference type="Reactome" id="R-HSA-8873719">
    <property type="pathway name" value="RAB geranylgeranylation"/>
</dbReference>
<dbReference type="SignaLink" id="Q7Z6P3"/>
<dbReference type="BioGRID-ORCS" id="401258">
    <property type="hits" value="13 hits in 295 CRISPR screens"/>
</dbReference>
<dbReference type="GenomeRNAi" id="401258"/>
<dbReference type="Pharos" id="Q7Z6P3">
    <property type="development level" value="Tdark"/>
</dbReference>
<dbReference type="PRO" id="PR:Q7Z6P3"/>
<dbReference type="Proteomes" id="UP000005640">
    <property type="component" value="Chromosome 6"/>
</dbReference>
<dbReference type="RNAct" id="Q7Z6P3">
    <property type="molecule type" value="protein"/>
</dbReference>
<dbReference type="Bgee" id="ENSG00000255587">
    <property type="expression patterns" value="Expressed in bone marrow and 54 other cell types or tissues"/>
</dbReference>
<dbReference type="GO" id="GO:0035577">
    <property type="term" value="C:azurophil granule membrane"/>
    <property type="evidence" value="ECO:0000304"/>
    <property type="project" value="Reactome"/>
</dbReference>
<dbReference type="GO" id="GO:0005886">
    <property type="term" value="C:plasma membrane"/>
    <property type="evidence" value="ECO:0000304"/>
    <property type="project" value="Reactome"/>
</dbReference>
<dbReference type="GO" id="GO:0035579">
    <property type="term" value="C:specific granule membrane"/>
    <property type="evidence" value="ECO:0000304"/>
    <property type="project" value="Reactome"/>
</dbReference>
<dbReference type="GO" id="GO:0005509">
    <property type="term" value="F:calcium ion binding"/>
    <property type="evidence" value="ECO:0007669"/>
    <property type="project" value="InterPro"/>
</dbReference>
<dbReference type="GO" id="GO:0005525">
    <property type="term" value="F:GTP binding"/>
    <property type="evidence" value="ECO:0000318"/>
    <property type="project" value="GO_Central"/>
</dbReference>
<dbReference type="GO" id="GO:0003924">
    <property type="term" value="F:GTPase activity"/>
    <property type="evidence" value="ECO:0000318"/>
    <property type="project" value="GO_Central"/>
</dbReference>
<dbReference type="GO" id="GO:0002553">
    <property type="term" value="P:histamine secretion by mast cell"/>
    <property type="evidence" value="ECO:0007669"/>
    <property type="project" value="Ensembl"/>
</dbReference>
<dbReference type="GO" id="GO:0097279">
    <property type="term" value="P:histamine secretion mediated by IgE immunoglobulin"/>
    <property type="evidence" value="ECO:0007669"/>
    <property type="project" value="Ensembl"/>
</dbReference>
<dbReference type="GO" id="GO:0016192">
    <property type="term" value="P:vesicle-mediated transport"/>
    <property type="evidence" value="ECO:0000318"/>
    <property type="project" value="GO_Central"/>
</dbReference>
<dbReference type="CDD" id="cd00154">
    <property type="entry name" value="Rab"/>
    <property type="match status" value="1"/>
</dbReference>
<dbReference type="FunFam" id="3.40.50.300:FF:001129">
    <property type="entry name" value="ras-related protein Rab-44 isoform X2"/>
    <property type="match status" value="1"/>
</dbReference>
<dbReference type="Gene3D" id="1.10.238.10">
    <property type="entry name" value="EF-hand"/>
    <property type="match status" value="1"/>
</dbReference>
<dbReference type="Gene3D" id="3.40.50.300">
    <property type="entry name" value="P-loop containing nucleotide triphosphate hydrolases"/>
    <property type="match status" value="1"/>
</dbReference>
<dbReference type="InterPro" id="IPR011992">
    <property type="entry name" value="EF-hand-dom_pair"/>
</dbReference>
<dbReference type="InterPro" id="IPR002048">
    <property type="entry name" value="EF_hand_dom"/>
</dbReference>
<dbReference type="InterPro" id="IPR027417">
    <property type="entry name" value="P-loop_NTPase"/>
</dbReference>
<dbReference type="InterPro" id="IPR050227">
    <property type="entry name" value="Rab"/>
</dbReference>
<dbReference type="InterPro" id="IPR005225">
    <property type="entry name" value="Small_GTP-bd"/>
</dbReference>
<dbReference type="InterPro" id="IPR001806">
    <property type="entry name" value="Small_GTPase"/>
</dbReference>
<dbReference type="NCBIfam" id="TIGR00231">
    <property type="entry name" value="small_GTP"/>
    <property type="match status" value="1"/>
</dbReference>
<dbReference type="PANTHER" id="PTHR47977">
    <property type="entry name" value="RAS-RELATED PROTEIN RAB"/>
    <property type="match status" value="1"/>
</dbReference>
<dbReference type="Pfam" id="PF00071">
    <property type="entry name" value="Ras"/>
    <property type="match status" value="1"/>
</dbReference>
<dbReference type="PRINTS" id="PR00449">
    <property type="entry name" value="RASTRNSFRMNG"/>
</dbReference>
<dbReference type="SMART" id="SM00175">
    <property type="entry name" value="RAB"/>
    <property type="match status" value="1"/>
</dbReference>
<dbReference type="SMART" id="SM00173">
    <property type="entry name" value="RAS"/>
    <property type="match status" value="1"/>
</dbReference>
<dbReference type="SMART" id="SM00174">
    <property type="entry name" value="RHO"/>
    <property type="match status" value="1"/>
</dbReference>
<dbReference type="SUPFAM" id="SSF47473">
    <property type="entry name" value="EF-hand"/>
    <property type="match status" value="1"/>
</dbReference>
<dbReference type="SUPFAM" id="SSF52540">
    <property type="entry name" value="P-loop containing nucleoside triphosphate hydrolases"/>
    <property type="match status" value="1"/>
</dbReference>
<dbReference type="PROSITE" id="PS50222">
    <property type="entry name" value="EF_HAND_2"/>
    <property type="match status" value="1"/>
</dbReference>
<dbReference type="PROSITE" id="PS51419">
    <property type="entry name" value="RAB"/>
    <property type="match status" value="1"/>
</dbReference>
<name>RAB44_HUMAN</name>
<comment type="subcellular location">
    <subcellularLocation>
        <location evidence="5">Cell membrane</location>
        <topology evidence="5">Lipid-anchor</topology>
        <orientation evidence="5">Cytoplasmic side</orientation>
    </subcellularLocation>
</comment>
<comment type="similarity">
    <text evidence="5">Belongs to the small GTPase superfamily. Rab family.</text>
</comment>
<protein>
    <recommendedName>
        <fullName>Ras-related protein Rab-44</fullName>
    </recommendedName>
</protein>